<comment type="function">
    <text evidence="4">Auxin response factors (ARFs) are transcriptional factors that bind specifically to the DNA sequence 5'-TGTCTC-3' found in the auxin-responsive promoter elements (AuxREs). Could act as transcriptional activator or repressor. Formation of heterodimers with Aux/IAA proteins may alter their ability to modulate early auxin response genes expression.</text>
</comment>
<comment type="subunit">
    <text evidence="1">Homo and heterodimers.</text>
</comment>
<comment type="subcellular location">
    <subcellularLocation>
        <location>Nucleus</location>
    </subcellularLocation>
</comment>
<comment type="similarity">
    <text evidence="6">Belongs to the ARF family.</text>
</comment>
<comment type="sequence caution" evidence="6">
    <conflict type="erroneous gene model prediction">
        <sequence resource="EMBL-CDS" id="AAF17677"/>
    </conflict>
</comment>
<comment type="sequence caution" evidence="6">
    <conflict type="erroneous gene model prediction">
        <sequence resource="EMBL-CDS" id="AAG51629"/>
    </conflict>
</comment>
<accession>Q84WU6</accession>
<accession>B2CTG7</accession>
<accession>B2CTG8</accession>
<accession>B2CTH0</accession>
<accession>Q93ZY5</accession>
<accession>Q9CA12</accession>
<accession>Q9SH16</accession>
<gene>
    <name type="primary">ARF17</name>
    <name type="ordered locus">At1g77850</name>
    <name type="ORF">F28K19.6</name>
    <name type="ORF">T32E8.16</name>
</gene>
<proteinExistence type="evidence at transcript level"/>
<feature type="chain" id="PRO_0000111521" description="Auxin response factor 17">
    <location>
        <begin position="1"/>
        <end position="585"/>
    </location>
</feature>
<feature type="DNA-binding region" description="TF-B3" evidence="2">
    <location>
        <begin position="119"/>
        <end position="221"/>
    </location>
</feature>
<feature type="region of interest" description="Disordered" evidence="3">
    <location>
        <begin position="483"/>
        <end position="517"/>
    </location>
</feature>
<feature type="region of interest" description="Disordered" evidence="3">
    <location>
        <begin position="535"/>
        <end position="585"/>
    </location>
</feature>
<feature type="compositionally biased region" description="Low complexity" evidence="3">
    <location>
        <begin position="488"/>
        <end position="510"/>
    </location>
</feature>
<feature type="compositionally biased region" description="Polar residues" evidence="3">
    <location>
        <begin position="573"/>
        <end position="585"/>
    </location>
</feature>
<feature type="sequence variant" description="In strain: cv. Ag-0, cv. An-1, cv. Cvi-0, cv. Edi-0, cv. Kas-2, cv. Ll-0, cv. Nok-3, cv. Wassilewskija, cv. Wei-0 and cv. Wt-5." evidence="5">
    <original>Y</original>
    <variation>F</variation>
    <location>
        <position position="414"/>
    </location>
</feature>
<feature type="sequence variant" description="In strain: cv. Ag-0, cv. An-1, cv. Cvi-0, cv. Edi-0, cv. Ei-2, cv. Gy-2, cv. Kas-2, cv. Ll-0, cv. Mt-0, cv. Nok-3, cv. Wassilewskija, cv. Wei-0 and cv. Wt-5." evidence="5">
    <original>S</original>
    <variation>P</variation>
    <location>
        <position position="518"/>
    </location>
</feature>
<feature type="sequence conflict" description="In Ref. 3; AAL07033." evidence="6" ref="3">
    <original>R</original>
    <variation>Q</variation>
    <location>
        <position position="102"/>
    </location>
</feature>
<feature type="sequence conflict" description="In Ref. 3; AAL07033." evidence="6" ref="3">
    <original>G</original>
    <variation>R</variation>
    <location>
        <position position="456"/>
    </location>
</feature>
<organism>
    <name type="scientific">Arabidopsis thaliana</name>
    <name type="common">Mouse-ear cress</name>
    <dbReference type="NCBI Taxonomy" id="3702"/>
    <lineage>
        <taxon>Eukaryota</taxon>
        <taxon>Viridiplantae</taxon>
        <taxon>Streptophyta</taxon>
        <taxon>Embryophyta</taxon>
        <taxon>Tracheophyta</taxon>
        <taxon>Spermatophyta</taxon>
        <taxon>Magnoliopsida</taxon>
        <taxon>eudicotyledons</taxon>
        <taxon>Gunneridae</taxon>
        <taxon>Pentapetalae</taxon>
        <taxon>rosids</taxon>
        <taxon>malvids</taxon>
        <taxon>Brassicales</taxon>
        <taxon>Brassicaceae</taxon>
        <taxon>Camelineae</taxon>
        <taxon>Arabidopsis</taxon>
    </lineage>
</organism>
<sequence length="585" mass="63742">MSPPSATAGDINHREVDPTIWRACAGASVQIPVLHSRVYYFPQGHVEHCCPLLSTLPSSTSPVPCIITSIQLLADPVTDEVFAHLILQPMTQQQFTPTNYSRFGRFDGDVDDNNKVTTFAKILTPSDANNGGGFSVPRFCADSVFPLLNFQIDPPVQKLYVTDIHGAVWDFRHIYRGTPRRHLLTTGWSKFVNSKKLIAGDSVVFMRKSADEMFIGVRRTPISSSDGGSSYYGGDEYNGYYSQSSVAKEDDGSPKKTFRRSGNGKLTAEAVTDAINRASQGLPFEVVFYPAAGWSEFVVRAEDVESSMSMYWTPGTRVKMAMETEDSSRITWFQGIVSSTYQETGPWRGSPWKQLQITWDEPEILQNVKRVNPWQVEIAAHATQLHTPFPPAKRLKYPQPGGGFLSGDDGEILYPQSGLSSAAAPDPSPSMFSYSTFPAGMQGARQYDFGSFNPTGFIGGNPPQLFTNNFLSPLPDLGKVSTEMMNFGSPPSDNLSPNSNTTNLSSGNDLVGNRGPLSKKVNSIQLFGKIITVEEHSESGPAESGLCEEDGSKESSDNETQLSLSHAPPSVPKHSNSNAGSSSQG</sequence>
<dbReference type="EMBL" id="AC009243">
    <property type="protein sequence ID" value="AAF17677.1"/>
    <property type="status" value="ALT_SEQ"/>
    <property type="molecule type" value="Genomic_DNA"/>
</dbReference>
<dbReference type="EMBL" id="AC012193">
    <property type="protein sequence ID" value="AAG51629.1"/>
    <property type="status" value="ALT_SEQ"/>
    <property type="molecule type" value="Genomic_DNA"/>
</dbReference>
<dbReference type="EMBL" id="CP002684">
    <property type="protein sequence ID" value="AEE36034.1"/>
    <property type="molecule type" value="Genomic_DNA"/>
</dbReference>
<dbReference type="EMBL" id="AY056184">
    <property type="protein sequence ID" value="AAL07033.1"/>
    <property type="molecule type" value="mRNA"/>
</dbReference>
<dbReference type="EMBL" id="BT002749">
    <property type="protein sequence ID" value="AAO22578.1"/>
    <property type="molecule type" value="mRNA"/>
</dbReference>
<dbReference type="EMBL" id="EU550144">
    <property type="protein sequence ID" value="ACB30930.1"/>
    <property type="molecule type" value="Genomic_DNA"/>
</dbReference>
<dbReference type="EMBL" id="EU550145">
    <property type="protein sequence ID" value="ACB30931.1"/>
    <property type="molecule type" value="Genomic_DNA"/>
</dbReference>
<dbReference type="EMBL" id="EU550146">
    <property type="protein sequence ID" value="ACB30932.1"/>
    <property type="molecule type" value="Genomic_DNA"/>
</dbReference>
<dbReference type="EMBL" id="EU550147">
    <property type="protein sequence ID" value="ACB30933.1"/>
    <property type="molecule type" value="Genomic_DNA"/>
</dbReference>
<dbReference type="EMBL" id="EU550148">
    <property type="protein sequence ID" value="ACB30934.1"/>
    <property type="molecule type" value="Genomic_DNA"/>
</dbReference>
<dbReference type="EMBL" id="EU550149">
    <property type="protein sequence ID" value="ACB30935.1"/>
    <property type="molecule type" value="Genomic_DNA"/>
</dbReference>
<dbReference type="EMBL" id="EU550150">
    <property type="protein sequence ID" value="ACB30936.1"/>
    <property type="molecule type" value="Genomic_DNA"/>
</dbReference>
<dbReference type="EMBL" id="EU550151">
    <property type="protein sequence ID" value="ACB30937.1"/>
    <property type="molecule type" value="Genomic_DNA"/>
</dbReference>
<dbReference type="EMBL" id="EU550152">
    <property type="protein sequence ID" value="ACB30938.1"/>
    <property type="molecule type" value="Genomic_DNA"/>
</dbReference>
<dbReference type="EMBL" id="EU550153">
    <property type="protein sequence ID" value="ACB30939.1"/>
    <property type="molecule type" value="Genomic_DNA"/>
</dbReference>
<dbReference type="EMBL" id="EU550154">
    <property type="protein sequence ID" value="ACB30940.1"/>
    <property type="molecule type" value="Genomic_DNA"/>
</dbReference>
<dbReference type="EMBL" id="EU550155">
    <property type="protein sequence ID" value="ACB30941.1"/>
    <property type="molecule type" value="Genomic_DNA"/>
</dbReference>
<dbReference type="EMBL" id="EU550156">
    <property type="protein sequence ID" value="ACB30942.1"/>
    <property type="molecule type" value="Genomic_DNA"/>
</dbReference>
<dbReference type="EMBL" id="EU550157">
    <property type="protein sequence ID" value="ACB30943.1"/>
    <property type="molecule type" value="Genomic_DNA"/>
</dbReference>
<dbReference type="EMBL" id="EU550158">
    <property type="protein sequence ID" value="ACB30944.1"/>
    <property type="molecule type" value="Genomic_DNA"/>
</dbReference>
<dbReference type="EMBL" id="EU550159">
    <property type="protein sequence ID" value="ACB30945.1"/>
    <property type="molecule type" value="Genomic_DNA"/>
</dbReference>
<dbReference type="EMBL" id="EU550160">
    <property type="protein sequence ID" value="ACB30946.1"/>
    <property type="molecule type" value="Genomic_DNA"/>
</dbReference>
<dbReference type="EMBL" id="EU550161">
    <property type="protein sequence ID" value="ACB30947.1"/>
    <property type="molecule type" value="Genomic_DNA"/>
</dbReference>
<dbReference type="EMBL" id="EU550162">
    <property type="protein sequence ID" value="ACB30948.1"/>
    <property type="molecule type" value="Genomic_DNA"/>
</dbReference>
<dbReference type="EMBL" id="EU550163">
    <property type="protein sequence ID" value="ACB30949.1"/>
    <property type="molecule type" value="Genomic_DNA"/>
</dbReference>
<dbReference type="EMBL" id="EU550164">
    <property type="protein sequence ID" value="ACB30950.1"/>
    <property type="molecule type" value="Genomic_DNA"/>
</dbReference>
<dbReference type="EMBL" id="EU550165">
    <property type="protein sequence ID" value="ACB30951.1"/>
    <property type="molecule type" value="Genomic_DNA"/>
</dbReference>
<dbReference type="EMBL" id="EU550166">
    <property type="protein sequence ID" value="ACB30952.1"/>
    <property type="molecule type" value="Genomic_DNA"/>
</dbReference>
<dbReference type="EMBL" id="EU550167">
    <property type="protein sequence ID" value="ACB30953.1"/>
    <property type="molecule type" value="Genomic_DNA"/>
</dbReference>
<dbReference type="PIR" id="D96808">
    <property type="entry name" value="D96808"/>
</dbReference>
<dbReference type="RefSeq" id="NP_001322496.1">
    <property type="nucleotide sequence ID" value="NM_001334800.1"/>
</dbReference>
<dbReference type="RefSeq" id="NP_565161.1">
    <property type="nucleotide sequence ID" value="NM_106434.2"/>
</dbReference>
<dbReference type="SMR" id="Q84WU6"/>
<dbReference type="BioGRID" id="29339">
    <property type="interactions" value="8"/>
</dbReference>
<dbReference type="FunCoup" id="Q84WU6">
    <property type="interactions" value="112"/>
</dbReference>
<dbReference type="IntAct" id="Q84WU6">
    <property type="interactions" value="7"/>
</dbReference>
<dbReference type="STRING" id="3702.Q84WU6"/>
<dbReference type="PaxDb" id="3702-AT1G77850.1"/>
<dbReference type="ProteomicsDB" id="241025"/>
<dbReference type="EnsemblPlants" id="AT1G77850.1">
    <property type="protein sequence ID" value="AT1G77850.1"/>
    <property type="gene ID" value="AT1G77850"/>
</dbReference>
<dbReference type="GeneID" id="844120"/>
<dbReference type="Gramene" id="AT1G77850.1">
    <property type="protein sequence ID" value="AT1G77850.1"/>
    <property type="gene ID" value="AT1G77850"/>
</dbReference>
<dbReference type="KEGG" id="ath:AT1G77850"/>
<dbReference type="Araport" id="AT1G77850"/>
<dbReference type="TAIR" id="AT1G77850">
    <property type="gene designation" value="ARF17"/>
</dbReference>
<dbReference type="eggNOG" id="ENOG502QVP0">
    <property type="taxonomic scope" value="Eukaryota"/>
</dbReference>
<dbReference type="HOGENOM" id="CLU_002626_3_3_1"/>
<dbReference type="InParanoid" id="Q84WU6"/>
<dbReference type="OMA" id="HRFFLCT"/>
<dbReference type="PhylomeDB" id="Q84WU6"/>
<dbReference type="PRO" id="PR:Q84WU6"/>
<dbReference type="Proteomes" id="UP000006548">
    <property type="component" value="Chromosome 1"/>
</dbReference>
<dbReference type="ExpressionAtlas" id="Q84WU6">
    <property type="expression patterns" value="baseline and differential"/>
</dbReference>
<dbReference type="GO" id="GO:0005634">
    <property type="term" value="C:nucleus"/>
    <property type="evidence" value="ECO:0007669"/>
    <property type="project" value="UniProtKB-SubCell"/>
</dbReference>
<dbReference type="GO" id="GO:0000987">
    <property type="term" value="F:cis-regulatory region sequence-specific DNA binding"/>
    <property type="evidence" value="ECO:0000314"/>
    <property type="project" value="TAIR"/>
</dbReference>
<dbReference type="GO" id="GO:0003700">
    <property type="term" value="F:DNA-binding transcription factor activity"/>
    <property type="evidence" value="ECO:0000250"/>
    <property type="project" value="TAIR"/>
</dbReference>
<dbReference type="GO" id="GO:0003690">
    <property type="term" value="F:double-stranded DNA binding"/>
    <property type="evidence" value="ECO:0000314"/>
    <property type="project" value="TAIR"/>
</dbReference>
<dbReference type="GO" id="GO:0048830">
    <property type="term" value="P:adventitious root development"/>
    <property type="evidence" value="ECO:0000315"/>
    <property type="project" value="TAIR"/>
</dbReference>
<dbReference type="GO" id="GO:0009653">
    <property type="term" value="P:anatomical structure morphogenesis"/>
    <property type="evidence" value="ECO:0000315"/>
    <property type="project" value="TAIR"/>
</dbReference>
<dbReference type="GO" id="GO:0009734">
    <property type="term" value="P:auxin-activated signaling pathway"/>
    <property type="evidence" value="ECO:0000304"/>
    <property type="project" value="TAIR"/>
</dbReference>
<dbReference type="GO" id="GO:0052543">
    <property type="term" value="P:callose deposition in cell wall"/>
    <property type="evidence" value="ECO:0000315"/>
    <property type="project" value="TAIR"/>
</dbReference>
<dbReference type="GO" id="GO:0009555">
    <property type="term" value="P:pollen development"/>
    <property type="evidence" value="ECO:0000315"/>
    <property type="project" value="TAIR"/>
</dbReference>
<dbReference type="GO" id="GO:0010208">
    <property type="term" value="P:pollen wall assembly"/>
    <property type="evidence" value="ECO:0000315"/>
    <property type="project" value="TAIR"/>
</dbReference>
<dbReference type="GO" id="GO:0120195">
    <property type="term" value="P:positive regulation of anther dehiscence"/>
    <property type="evidence" value="ECO:0000315"/>
    <property type="project" value="TAIR"/>
</dbReference>
<dbReference type="GO" id="GO:0006355">
    <property type="term" value="P:regulation of DNA-templated transcription"/>
    <property type="evidence" value="ECO:0000304"/>
    <property type="project" value="TAIR"/>
</dbReference>
<dbReference type="CDD" id="cd10017">
    <property type="entry name" value="B3_DNA"/>
    <property type="match status" value="1"/>
</dbReference>
<dbReference type="FunFam" id="2.40.330.10:FF:000001">
    <property type="entry name" value="Auxin response factor"/>
    <property type="match status" value="1"/>
</dbReference>
<dbReference type="Gene3D" id="2.30.30.1040">
    <property type="match status" value="1"/>
</dbReference>
<dbReference type="Gene3D" id="2.40.330.10">
    <property type="entry name" value="DNA-binding pseudobarrel domain"/>
    <property type="match status" value="1"/>
</dbReference>
<dbReference type="InterPro" id="IPR010525">
    <property type="entry name" value="ARF_dom"/>
</dbReference>
<dbReference type="InterPro" id="IPR044835">
    <property type="entry name" value="ARF_plant"/>
</dbReference>
<dbReference type="InterPro" id="IPR003340">
    <property type="entry name" value="B3_DNA-bd"/>
</dbReference>
<dbReference type="InterPro" id="IPR015300">
    <property type="entry name" value="DNA-bd_pseudobarrel_sf"/>
</dbReference>
<dbReference type="PANTHER" id="PTHR31384:SF94">
    <property type="entry name" value="AUXIN RESPONSE FACTOR 17"/>
    <property type="match status" value="1"/>
</dbReference>
<dbReference type="PANTHER" id="PTHR31384">
    <property type="entry name" value="AUXIN RESPONSE FACTOR 4-RELATED"/>
    <property type="match status" value="1"/>
</dbReference>
<dbReference type="Pfam" id="PF06507">
    <property type="entry name" value="ARF_AD"/>
    <property type="match status" value="1"/>
</dbReference>
<dbReference type="Pfam" id="PF02362">
    <property type="entry name" value="B3"/>
    <property type="match status" value="1"/>
</dbReference>
<dbReference type="SMART" id="SM01019">
    <property type="entry name" value="B3"/>
    <property type="match status" value="1"/>
</dbReference>
<dbReference type="SUPFAM" id="SSF101936">
    <property type="entry name" value="DNA-binding pseudobarrel domain"/>
    <property type="match status" value="1"/>
</dbReference>
<dbReference type="PROSITE" id="PS50863">
    <property type="entry name" value="B3"/>
    <property type="match status" value="1"/>
</dbReference>
<reference key="1">
    <citation type="journal article" date="2000" name="Nature">
        <title>Sequence and analysis of chromosome 1 of the plant Arabidopsis thaliana.</title>
        <authorList>
            <person name="Theologis A."/>
            <person name="Ecker J.R."/>
            <person name="Palm C.J."/>
            <person name="Federspiel N.A."/>
            <person name="Kaul S."/>
            <person name="White O."/>
            <person name="Alonso J."/>
            <person name="Altafi H."/>
            <person name="Araujo R."/>
            <person name="Bowman C.L."/>
            <person name="Brooks S.Y."/>
            <person name="Buehler E."/>
            <person name="Chan A."/>
            <person name="Chao Q."/>
            <person name="Chen H."/>
            <person name="Cheuk R.F."/>
            <person name="Chin C.W."/>
            <person name="Chung M.K."/>
            <person name="Conn L."/>
            <person name="Conway A.B."/>
            <person name="Conway A.R."/>
            <person name="Creasy T.H."/>
            <person name="Dewar K."/>
            <person name="Dunn P."/>
            <person name="Etgu P."/>
            <person name="Feldblyum T.V."/>
            <person name="Feng J.-D."/>
            <person name="Fong B."/>
            <person name="Fujii C.Y."/>
            <person name="Gill J.E."/>
            <person name="Goldsmith A.D."/>
            <person name="Haas B."/>
            <person name="Hansen N.F."/>
            <person name="Hughes B."/>
            <person name="Huizar L."/>
            <person name="Hunter J.L."/>
            <person name="Jenkins J."/>
            <person name="Johnson-Hopson C."/>
            <person name="Khan S."/>
            <person name="Khaykin E."/>
            <person name="Kim C.J."/>
            <person name="Koo H.L."/>
            <person name="Kremenetskaia I."/>
            <person name="Kurtz D.B."/>
            <person name="Kwan A."/>
            <person name="Lam B."/>
            <person name="Langin-Hooper S."/>
            <person name="Lee A."/>
            <person name="Lee J.M."/>
            <person name="Lenz C.A."/>
            <person name="Li J.H."/>
            <person name="Li Y.-P."/>
            <person name="Lin X."/>
            <person name="Liu S.X."/>
            <person name="Liu Z.A."/>
            <person name="Luros J.S."/>
            <person name="Maiti R."/>
            <person name="Marziali A."/>
            <person name="Militscher J."/>
            <person name="Miranda M."/>
            <person name="Nguyen M."/>
            <person name="Nierman W.C."/>
            <person name="Osborne B.I."/>
            <person name="Pai G."/>
            <person name="Peterson J."/>
            <person name="Pham P.K."/>
            <person name="Rizzo M."/>
            <person name="Rooney T."/>
            <person name="Rowley D."/>
            <person name="Sakano H."/>
            <person name="Salzberg S.L."/>
            <person name="Schwartz J.R."/>
            <person name="Shinn P."/>
            <person name="Southwick A.M."/>
            <person name="Sun H."/>
            <person name="Tallon L.J."/>
            <person name="Tambunga G."/>
            <person name="Toriumi M.J."/>
            <person name="Town C.D."/>
            <person name="Utterback T."/>
            <person name="Van Aken S."/>
            <person name="Vaysberg M."/>
            <person name="Vysotskaia V.S."/>
            <person name="Walker M."/>
            <person name="Wu D."/>
            <person name="Yu G."/>
            <person name="Fraser C.M."/>
            <person name="Venter J.C."/>
            <person name="Davis R.W."/>
        </authorList>
    </citation>
    <scope>NUCLEOTIDE SEQUENCE [LARGE SCALE GENOMIC DNA]</scope>
    <source>
        <strain>cv. Columbia</strain>
    </source>
</reference>
<reference key="2">
    <citation type="journal article" date="2017" name="Plant J.">
        <title>Araport11: a complete reannotation of the Arabidopsis thaliana reference genome.</title>
        <authorList>
            <person name="Cheng C.Y."/>
            <person name="Krishnakumar V."/>
            <person name="Chan A.P."/>
            <person name="Thibaud-Nissen F."/>
            <person name="Schobel S."/>
            <person name="Town C.D."/>
        </authorList>
    </citation>
    <scope>GENOME REANNOTATION</scope>
    <source>
        <strain>cv. Columbia</strain>
    </source>
</reference>
<reference key="3">
    <citation type="journal article" date="2003" name="Science">
        <title>Empirical analysis of transcriptional activity in the Arabidopsis genome.</title>
        <authorList>
            <person name="Yamada K."/>
            <person name="Lim J."/>
            <person name="Dale J.M."/>
            <person name="Chen H."/>
            <person name="Shinn P."/>
            <person name="Palm C.J."/>
            <person name="Southwick A.M."/>
            <person name="Wu H.C."/>
            <person name="Kim C.J."/>
            <person name="Nguyen M."/>
            <person name="Pham P.K."/>
            <person name="Cheuk R.F."/>
            <person name="Karlin-Newmann G."/>
            <person name="Liu S.X."/>
            <person name="Lam B."/>
            <person name="Sakano H."/>
            <person name="Wu T."/>
            <person name="Yu G."/>
            <person name="Miranda M."/>
            <person name="Quach H.L."/>
            <person name="Tripp M."/>
            <person name="Chang C.H."/>
            <person name="Lee J.M."/>
            <person name="Toriumi M.J."/>
            <person name="Chan M.M."/>
            <person name="Tang C.C."/>
            <person name="Onodera C.S."/>
            <person name="Deng J.M."/>
            <person name="Akiyama K."/>
            <person name="Ansari Y."/>
            <person name="Arakawa T."/>
            <person name="Banh J."/>
            <person name="Banno F."/>
            <person name="Bowser L."/>
            <person name="Brooks S.Y."/>
            <person name="Carninci P."/>
            <person name="Chao Q."/>
            <person name="Choy N."/>
            <person name="Enju A."/>
            <person name="Goldsmith A.D."/>
            <person name="Gurjal M."/>
            <person name="Hansen N.F."/>
            <person name="Hayashizaki Y."/>
            <person name="Johnson-Hopson C."/>
            <person name="Hsuan V.W."/>
            <person name="Iida K."/>
            <person name="Karnes M."/>
            <person name="Khan S."/>
            <person name="Koesema E."/>
            <person name="Ishida J."/>
            <person name="Jiang P.X."/>
            <person name="Jones T."/>
            <person name="Kawai J."/>
            <person name="Kamiya A."/>
            <person name="Meyers C."/>
            <person name="Nakajima M."/>
            <person name="Narusaka M."/>
            <person name="Seki M."/>
            <person name="Sakurai T."/>
            <person name="Satou M."/>
            <person name="Tamse R."/>
            <person name="Vaysberg M."/>
            <person name="Wallender E.K."/>
            <person name="Wong C."/>
            <person name="Yamamura Y."/>
            <person name="Yuan S."/>
            <person name="Shinozaki K."/>
            <person name="Davis R.W."/>
            <person name="Theologis A."/>
            <person name="Ecker J.R."/>
        </authorList>
    </citation>
    <scope>NUCLEOTIDE SEQUENCE [LARGE SCALE MRNA]</scope>
    <source>
        <strain>cv. Columbia</strain>
    </source>
</reference>
<reference key="4">
    <citation type="journal article" date="2008" name="Plant Physiol.">
        <title>Sequence variation of microRNAs and their binding sites in Arabidopsis.</title>
        <authorList>
            <person name="Ehrenreich I.M."/>
            <person name="Purugganan M.D."/>
        </authorList>
    </citation>
    <scope>NUCLEOTIDE SEQUENCE [GENOMIC DNA] OF 375-533</scope>
    <scope>VARIANTS PHE-414 AND PRO-518</scope>
    <source>
        <strain>cv. Ag-0</strain>
        <strain>cv. An-1</strain>
        <strain>cv. Bay-0</strain>
        <strain>cv. Br-0</strain>
        <strain>cv. C24</strain>
        <strain>cv. Ct-1</strain>
        <strain>cv. Cvi-1</strain>
        <strain>cv. Edi-0</strain>
        <strain>cv. Ei-2</strain>
        <strain>cv. Ga-0</strain>
        <strain>cv. Gy-0</strain>
        <strain>cv. Kas-2</strain>
        <strain>cv. Ll-0</strain>
        <strain>cv. Mrk-0</strain>
        <strain>cv. Ms-0</strain>
        <strain>cv. Mt-0</strain>
        <strain>cv. Nd-1</strain>
        <strain>cv. Nok-3</strain>
        <strain>cv. Oy-0</strain>
        <strain>cv. Sorbo</strain>
        <strain>cv. Wa-1</strain>
        <strain>cv. Wassilewskija</strain>
        <strain>cv. Wei-0</strain>
        <strain>cv. Wt-5</strain>
    </source>
</reference>
<reference key="5">
    <citation type="journal article" date="2002" name="Plant Mol. Biol.">
        <title>Auxin-responsive gene expression: genes, promoters and regulatory factors.</title>
        <authorList>
            <person name="Hagen G."/>
            <person name="Guilfoyle T.J."/>
        </authorList>
    </citation>
    <scope>GENE FAMILY</scope>
    <scope>NOMENCLATURE</scope>
    <scope>FUNCTION</scope>
</reference>
<reference key="6">
    <citation type="journal article" date="2008" name="Trends Plant Sci.">
        <title>The plant B3 superfamily.</title>
        <authorList>
            <person name="Swaminathan K."/>
            <person name="Peterson K."/>
            <person name="Jack T."/>
        </authorList>
    </citation>
    <scope>GENE FAMILY</scope>
</reference>
<name>ARFQ_ARATH</name>
<keyword id="KW-0927">Auxin signaling pathway</keyword>
<keyword id="KW-0238">DNA-binding</keyword>
<keyword id="KW-0539">Nucleus</keyword>
<keyword id="KW-1185">Reference proteome</keyword>
<keyword id="KW-0804">Transcription</keyword>
<keyword id="KW-0805">Transcription regulation</keyword>
<evidence type="ECO:0000250" key="1"/>
<evidence type="ECO:0000255" key="2">
    <source>
        <dbReference type="PROSITE-ProRule" id="PRU00326"/>
    </source>
</evidence>
<evidence type="ECO:0000256" key="3">
    <source>
        <dbReference type="SAM" id="MobiDB-lite"/>
    </source>
</evidence>
<evidence type="ECO:0000269" key="4">
    <source>
    </source>
</evidence>
<evidence type="ECO:0000269" key="5">
    <source>
    </source>
</evidence>
<evidence type="ECO:0000305" key="6"/>
<protein>
    <recommendedName>
        <fullName>Auxin response factor 17</fullName>
    </recommendedName>
</protein>